<feature type="chain" id="PRO_0000316575" description="Putative xanthine/uracil permease C887.17">
    <location>
        <begin position="1"/>
        <end position="625"/>
    </location>
</feature>
<feature type="transmembrane region" description="Helical" evidence="1">
    <location>
        <begin position="49"/>
        <end position="69"/>
    </location>
</feature>
<feature type="transmembrane region" description="Helical" evidence="1">
    <location>
        <begin position="107"/>
        <end position="127"/>
    </location>
</feature>
<feature type="transmembrane region" description="Helical" evidence="1">
    <location>
        <begin position="154"/>
        <end position="174"/>
    </location>
</feature>
<feature type="transmembrane region" description="Helical" evidence="1">
    <location>
        <begin position="192"/>
        <end position="212"/>
    </location>
</feature>
<feature type="transmembrane region" description="Helical" evidence="1">
    <location>
        <begin position="246"/>
        <end position="263"/>
    </location>
</feature>
<feature type="transmembrane region" description="Helical" evidence="1">
    <location>
        <begin position="328"/>
        <end position="348"/>
    </location>
</feature>
<feature type="transmembrane region" description="Helical" evidence="1">
    <location>
        <begin position="369"/>
        <end position="389"/>
    </location>
</feature>
<feature type="transmembrane region" description="Helical" evidence="1">
    <location>
        <begin position="406"/>
        <end position="426"/>
    </location>
</feature>
<feature type="transmembrane region" description="Helical" evidence="1">
    <location>
        <begin position="429"/>
        <end position="449"/>
    </location>
</feature>
<feature type="transmembrane region" description="Helical" evidence="1">
    <location>
        <begin position="465"/>
        <end position="485"/>
    </location>
</feature>
<feature type="region of interest" description="Disordered" evidence="2">
    <location>
        <begin position="595"/>
        <end position="625"/>
    </location>
</feature>
<organism>
    <name type="scientific">Schizosaccharomyces pombe (strain 972 / ATCC 24843)</name>
    <name type="common">Fission yeast</name>
    <dbReference type="NCBI Taxonomy" id="284812"/>
    <lineage>
        <taxon>Eukaryota</taxon>
        <taxon>Fungi</taxon>
        <taxon>Dikarya</taxon>
        <taxon>Ascomycota</taxon>
        <taxon>Taphrinomycotina</taxon>
        <taxon>Schizosaccharomycetes</taxon>
        <taxon>Schizosaccharomycetales</taxon>
        <taxon>Schizosaccharomycetaceae</taxon>
        <taxon>Schizosaccharomyces</taxon>
    </lineage>
</organism>
<gene>
    <name type="ORF">SPBC887.17</name>
</gene>
<dbReference type="EMBL" id="CU329671">
    <property type="protein sequence ID" value="CAA21902.1"/>
    <property type="molecule type" value="Genomic_DNA"/>
</dbReference>
<dbReference type="PIR" id="T40742">
    <property type="entry name" value="T40742"/>
</dbReference>
<dbReference type="RefSeq" id="NP_596491.1">
    <property type="nucleotide sequence ID" value="NM_001022411.2"/>
</dbReference>
<dbReference type="SMR" id="O94300"/>
<dbReference type="BioGRID" id="277755">
    <property type="interactions" value="30"/>
</dbReference>
<dbReference type="FunCoup" id="O94300">
    <property type="interactions" value="75"/>
</dbReference>
<dbReference type="STRING" id="284812.O94300"/>
<dbReference type="iPTMnet" id="O94300"/>
<dbReference type="PaxDb" id="4896-SPBC887.17.1"/>
<dbReference type="EnsemblFungi" id="SPBC887.17.1">
    <property type="protein sequence ID" value="SPBC887.17.1:pep"/>
    <property type="gene ID" value="SPBC887.17"/>
</dbReference>
<dbReference type="KEGG" id="spo:2541241"/>
<dbReference type="PomBase" id="SPBC887.17"/>
<dbReference type="VEuPathDB" id="FungiDB:SPBC887.17"/>
<dbReference type="eggNOG" id="ENOG502QQ5E">
    <property type="taxonomic scope" value="Eukaryota"/>
</dbReference>
<dbReference type="HOGENOM" id="CLU_024508_3_2_1"/>
<dbReference type="InParanoid" id="O94300"/>
<dbReference type="OMA" id="RKGSYFF"/>
<dbReference type="PhylomeDB" id="O94300"/>
<dbReference type="PRO" id="PR:O94300"/>
<dbReference type="Proteomes" id="UP000002485">
    <property type="component" value="Chromosome II"/>
</dbReference>
<dbReference type="GO" id="GO:0005794">
    <property type="term" value="C:Golgi apparatus"/>
    <property type="evidence" value="ECO:0007005"/>
    <property type="project" value="PomBase"/>
</dbReference>
<dbReference type="GO" id="GO:0000139">
    <property type="term" value="C:Golgi membrane"/>
    <property type="evidence" value="ECO:0007669"/>
    <property type="project" value="UniProtKB-SubCell"/>
</dbReference>
<dbReference type="GO" id="GO:0005886">
    <property type="term" value="C:plasma membrane"/>
    <property type="evidence" value="ECO:0000318"/>
    <property type="project" value="GO_Central"/>
</dbReference>
<dbReference type="GO" id="GO:0015207">
    <property type="term" value="F:adenine transmembrane transporter activity"/>
    <property type="evidence" value="ECO:0000250"/>
    <property type="project" value="PomBase"/>
</dbReference>
<dbReference type="GO" id="GO:0015208">
    <property type="term" value="F:guanine transmembrane transporter activity"/>
    <property type="evidence" value="ECO:0000250"/>
    <property type="project" value="PomBase"/>
</dbReference>
<dbReference type="GO" id="GO:0005345">
    <property type="term" value="F:purine nucleobase transmembrane transporter activity"/>
    <property type="evidence" value="ECO:0000318"/>
    <property type="project" value="GO_Central"/>
</dbReference>
<dbReference type="GO" id="GO:0098702">
    <property type="term" value="P:adenine import across plasma membrane"/>
    <property type="evidence" value="ECO:0000305"/>
    <property type="project" value="PomBase"/>
</dbReference>
<dbReference type="GO" id="GO:0015853">
    <property type="term" value="P:adenine transport"/>
    <property type="evidence" value="ECO:0000318"/>
    <property type="project" value="GO_Central"/>
</dbReference>
<dbReference type="GO" id="GO:0098710">
    <property type="term" value="P:guanine import across plasma membrane"/>
    <property type="evidence" value="ECO:0000305"/>
    <property type="project" value="PomBase"/>
</dbReference>
<dbReference type="GO" id="GO:0015854">
    <property type="term" value="P:guanine transport"/>
    <property type="evidence" value="ECO:0000318"/>
    <property type="project" value="GO_Central"/>
</dbReference>
<dbReference type="InterPro" id="IPR045018">
    <property type="entry name" value="Azg-like"/>
</dbReference>
<dbReference type="InterPro" id="IPR006043">
    <property type="entry name" value="NCS2"/>
</dbReference>
<dbReference type="PANTHER" id="PTHR43337">
    <property type="entry name" value="XANTHINE/URACIL PERMEASE C887.17-RELATED"/>
    <property type="match status" value="1"/>
</dbReference>
<dbReference type="PANTHER" id="PTHR43337:SF1">
    <property type="entry name" value="XANTHINE_URACIL PERMEASE C887.17-RELATED"/>
    <property type="match status" value="1"/>
</dbReference>
<dbReference type="Pfam" id="PF00860">
    <property type="entry name" value="Xan_ur_permease"/>
    <property type="match status" value="1"/>
</dbReference>
<sequence>MSITQKVRNWVEEFDVIVARSAFGRWFRLEGCGHPRERKGSRFSLEISAGLTTFFAMAYILAVNATILVDTGGTCECTEANRDDCDKLDDYVLCKEDFHRDLVTATAAISALASFCMGLFANMPVGMAPGMGLNAYFAYQVVGYNGTGRVSYREALLAVFVEGFIFTGLTVIGLRQWLARVIPASLKFATGAGIGLYLTIIGLSPSAGLGVIGHSSSDIVALGGCPPEYLNADYSCNGHQLQSGRMWVGIFCGGVLTAILMMYKFKGAVLAGIALVTITSWPRRSLVTMFPHTLTGDYNFDFFKKVVSFRKINRILVAQQWNVTGGQFAIALITFLYVDIMDMTGTLYSMANYAGLVDPRTQDFEGSAVAYIVDALSISIGSLFGCSPVTAFIESGSGISAGGRTGILGMVVGICFFISLFFAPIFSSIPVWATGSTLVLVGSMMMKSTTLINWSYLGDSIPAFITIALMPFTYSIAYGLIAGIICYALLNSIIYAIDKMSRGRLVPADYNQKEAWTWRVEGGLLPQWVRRLFKGNRRFWEDPDDRKAMDNATLEMATSRSYSEDGKNEKTTHEDVTMKETSLKKMDDERISVDEAVGESESFSNRQQDFRTPYAGIDMDTDDRI</sequence>
<proteinExistence type="inferred from homology"/>
<keyword id="KW-0333">Golgi apparatus</keyword>
<keyword id="KW-0472">Membrane</keyword>
<keyword id="KW-1185">Reference proteome</keyword>
<keyword id="KW-0812">Transmembrane</keyword>
<keyword id="KW-1133">Transmembrane helix</keyword>
<keyword id="KW-0813">Transport</keyword>
<evidence type="ECO:0000255" key="1"/>
<evidence type="ECO:0000256" key="2">
    <source>
        <dbReference type="SAM" id="MobiDB-lite"/>
    </source>
</evidence>
<evidence type="ECO:0000269" key="3">
    <source>
    </source>
</evidence>
<evidence type="ECO:0000305" key="4"/>
<comment type="subcellular location">
    <subcellularLocation>
        <location evidence="3">Golgi apparatus membrane</location>
        <topology evidence="3">Multi-pass membrane protein</topology>
    </subcellularLocation>
</comment>
<comment type="similarity">
    <text evidence="4">Belongs to the nucleobase:cation symporter-2 (NCS2) (TC 2.A.40) family. Azg-like subfamily.</text>
</comment>
<accession>O94300</accession>
<protein>
    <recommendedName>
        <fullName>Putative xanthine/uracil permease C887.17</fullName>
    </recommendedName>
</protein>
<reference key="1">
    <citation type="journal article" date="2002" name="Nature">
        <title>The genome sequence of Schizosaccharomyces pombe.</title>
        <authorList>
            <person name="Wood V."/>
            <person name="Gwilliam R."/>
            <person name="Rajandream M.A."/>
            <person name="Lyne M.H."/>
            <person name="Lyne R."/>
            <person name="Stewart A."/>
            <person name="Sgouros J.G."/>
            <person name="Peat N."/>
            <person name="Hayles J."/>
            <person name="Baker S.G."/>
            <person name="Basham D."/>
            <person name="Bowman S."/>
            <person name="Brooks K."/>
            <person name="Brown D."/>
            <person name="Brown S."/>
            <person name="Chillingworth T."/>
            <person name="Churcher C.M."/>
            <person name="Collins M."/>
            <person name="Connor R."/>
            <person name="Cronin A."/>
            <person name="Davis P."/>
            <person name="Feltwell T."/>
            <person name="Fraser A."/>
            <person name="Gentles S."/>
            <person name="Goble A."/>
            <person name="Hamlin N."/>
            <person name="Harris D.E."/>
            <person name="Hidalgo J."/>
            <person name="Hodgson G."/>
            <person name="Holroyd S."/>
            <person name="Hornsby T."/>
            <person name="Howarth S."/>
            <person name="Huckle E.J."/>
            <person name="Hunt S."/>
            <person name="Jagels K."/>
            <person name="James K.D."/>
            <person name="Jones L."/>
            <person name="Jones M."/>
            <person name="Leather S."/>
            <person name="McDonald S."/>
            <person name="McLean J."/>
            <person name="Mooney P."/>
            <person name="Moule S."/>
            <person name="Mungall K.L."/>
            <person name="Murphy L.D."/>
            <person name="Niblett D."/>
            <person name="Odell C."/>
            <person name="Oliver K."/>
            <person name="O'Neil S."/>
            <person name="Pearson D."/>
            <person name="Quail M.A."/>
            <person name="Rabbinowitsch E."/>
            <person name="Rutherford K.M."/>
            <person name="Rutter S."/>
            <person name="Saunders D."/>
            <person name="Seeger K."/>
            <person name="Sharp S."/>
            <person name="Skelton J."/>
            <person name="Simmonds M.N."/>
            <person name="Squares R."/>
            <person name="Squares S."/>
            <person name="Stevens K."/>
            <person name="Taylor K."/>
            <person name="Taylor R.G."/>
            <person name="Tivey A."/>
            <person name="Walsh S.V."/>
            <person name="Warren T."/>
            <person name="Whitehead S."/>
            <person name="Woodward J.R."/>
            <person name="Volckaert G."/>
            <person name="Aert R."/>
            <person name="Robben J."/>
            <person name="Grymonprez B."/>
            <person name="Weltjens I."/>
            <person name="Vanstreels E."/>
            <person name="Rieger M."/>
            <person name="Schaefer M."/>
            <person name="Mueller-Auer S."/>
            <person name="Gabel C."/>
            <person name="Fuchs M."/>
            <person name="Duesterhoeft A."/>
            <person name="Fritzc C."/>
            <person name="Holzer E."/>
            <person name="Moestl D."/>
            <person name="Hilbert H."/>
            <person name="Borzym K."/>
            <person name="Langer I."/>
            <person name="Beck A."/>
            <person name="Lehrach H."/>
            <person name="Reinhardt R."/>
            <person name="Pohl T.M."/>
            <person name="Eger P."/>
            <person name="Zimmermann W."/>
            <person name="Wedler H."/>
            <person name="Wambutt R."/>
            <person name="Purnelle B."/>
            <person name="Goffeau A."/>
            <person name="Cadieu E."/>
            <person name="Dreano S."/>
            <person name="Gloux S."/>
            <person name="Lelaure V."/>
            <person name="Mottier S."/>
            <person name="Galibert F."/>
            <person name="Aves S.J."/>
            <person name="Xiang Z."/>
            <person name="Hunt C."/>
            <person name="Moore K."/>
            <person name="Hurst S.M."/>
            <person name="Lucas M."/>
            <person name="Rochet M."/>
            <person name="Gaillardin C."/>
            <person name="Tallada V.A."/>
            <person name="Garzon A."/>
            <person name="Thode G."/>
            <person name="Daga R.R."/>
            <person name="Cruzado L."/>
            <person name="Jimenez J."/>
            <person name="Sanchez M."/>
            <person name="del Rey F."/>
            <person name="Benito J."/>
            <person name="Dominguez A."/>
            <person name="Revuelta J.L."/>
            <person name="Moreno S."/>
            <person name="Armstrong J."/>
            <person name="Forsburg S.L."/>
            <person name="Cerutti L."/>
            <person name="Lowe T."/>
            <person name="McCombie W.R."/>
            <person name="Paulsen I."/>
            <person name="Potashkin J."/>
            <person name="Shpakovski G.V."/>
            <person name="Ussery D."/>
            <person name="Barrell B.G."/>
            <person name="Nurse P."/>
        </authorList>
    </citation>
    <scope>NUCLEOTIDE SEQUENCE [LARGE SCALE GENOMIC DNA]</scope>
    <source>
        <strain>972 / ATCC 24843</strain>
    </source>
</reference>
<reference key="2">
    <citation type="journal article" date="2006" name="Nat. Biotechnol.">
        <title>ORFeome cloning and global analysis of protein localization in the fission yeast Schizosaccharomyces pombe.</title>
        <authorList>
            <person name="Matsuyama A."/>
            <person name="Arai R."/>
            <person name="Yashiroda Y."/>
            <person name="Shirai A."/>
            <person name="Kamata A."/>
            <person name="Sekido S."/>
            <person name="Kobayashi Y."/>
            <person name="Hashimoto A."/>
            <person name="Hamamoto M."/>
            <person name="Hiraoka Y."/>
            <person name="Horinouchi S."/>
            <person name="Yoshida M."/>
        </authorList>
    </citation>
    <scope>SUBCELLULAR LOCATION [LARGE SCALE ANALYSIS]</scope>
</reference>
<name>YOOH_SCHPO</name>